<evidence type="ECO:0000255" key="1">
    <source>
        <dbReference type="HAMAP-Rule" id="MF_00708"/>
    </source>
</evidence>
<protein>
    <recommendedName>
        <fullName evidence="1">Fumarate reductase subunit C</fullName>
    </recommendedName>
    <alternativeName>
        <fullName evidence="1">Fumarate reductase 15 kDa hydrophobic protein</fullName>
    </alternativeName>
    <alternativeName>
        <fullName evidence="1">Quinol-fumarate reductase subunit C</fullName>
        <shortName evidence="1">QFR subunit C</shortName>
    </alternativeName>
</protein>
<proteinExistence type="inferred from homology"/>
<keyword id="KW-0997">Cell inner membrane</keyword>
<keyword id="KW-1003">Cell membrane</keyword>
<keyword id="KW-0472">Membrane</keyword>
<keyword id="KW-0812">Transmembrane</keyword>
<keyword id="KW-1133">Transmembrane helix</keyword>
<reference key="1">
    <citation type="journal article" date="2006" name="BMC Genomics">
        <title>Complete genome sequence of Shigella flexneri 5b and comparison with Shigella flexneri 2a.</title>
        <authorList>
            <person name="Nie H."/>
            <person name="Yang F."/>
            <person name="Zhang X."/>
            <person name="Yang J."/>
            <person name="Chen L."/>
            <person name="Wang J."/>
            <person name="Xiong Z."/>
            <person name="Peng J."/>
            <person name="Sun L."/>
            <person name="Dong J."/>
            <person name="Xue Y."/>
            <person name="Xu X."/>
            <person name="Chen S."/>
            <person name="Yao Z."/>
            <person name="Shen Y."/>
            <person name="Jin Q."/>
        </authorList>
    </citation>
    <scope>NUCLEOTIDE SEQUENCE [LARGE SCALE GENOMIC DNA]</scope>
    <source>
        <strain>8401</strain>
    </source>
</reference>
<feature type="chain" id="PRO_1000045534" description="Fumarate reductase subunit C">
    <location>
        <begin position="1"/>
        <end position="131"/>
    </location>
</feature>
<feature type="transmembrane region" description="Helical" evidence="1">
    <location>
        <begin position="30"/>
        <end position="50"/>
    </location>
</feature>
<feature type="transmembrane region" description="Helical" evidence="1">
    <location>
        <begin position="63"/>
        <end position="83"/>
    </location>
</feature>
<feature type="transmembrane region" description="Helical" evidence="1">
    <location>
        <begin position="109"/>
        <end position="129"/>
    </location>
</feature>
<dbReference type="EMBL" id="CP000266">
    <property type="protein sequence ID" value="ABF06291.1"/>
    <property type="molecule type" value="Genomic_DNA"/>
</dbReference>
<dbReference type="RefSeq" id="WP_000208757.1">
    <property type="nucleotide sequence ID" value="NC_008258.1"/>
</dbReference>
<dbReference type="SMR" id="Q0SXC4"/>
<dbReference type="GeneID" id="93777670"/>
<dbReference type="KEGG" id="sfv:SFV_4311"/>
<dbReference type="HOGENOM" id="CLU_156492_0_0_6"/>
<dbReference type="Proteomes" id="UP000000659">
    <property type="component" value="Chromosome"/>
</dbReference>
<dbReference type="GO" id="GO:0045283">
    <property type="term" value="C:fumarate reductase complex"/>
    <property type="evidence" value="ECO:0007669"/>
    <property type="project" value="UniProtKB-UniRule"/>
</dbReference>
<dbReference type="GO" id="GO:0005886">
    <property type="term" value="C:plasma membrane"/>
    <property type="evidence" value="ECO:0007669"/>
    <property type="project" value="UniProtKB-SubCell"/>
</dbReference>
<dbReference type="GO" id="GO:0000104">
    <property type="term" value="F:succinate dehydrogenase activity"/>
    <property type="evidence" value="ECO:0007669"/>
    <property type="project" value="UniProtKB-UniRule"/>
</dbReference>
<dbReference type="CDD" id="cd00546">
    <property type="entry name" value="QFR_TypeD_subunitC"/>
    <property type="match status" value="1"/>
</dbReference>
<dbReference type="FunFam" id="1.20.1300.10:FF:000003">
    <property type="entry name" value="Fumarate reductase subunit C"/>
    <property type="match status" value="1"/>
</dbReference>
<dbReference type="Gene3D" id="1.20.1300.10">
    <property type="entry name" value="Fumarate reductase/succinate dehydrogenase, transmembrane subunit"/>
    <property type="match status" value="1"/>
</dbReference>
<dbReference type="HAMAP" id="MF_00708">
    <property type="entry name" value="Fumarate_red_C"/>
    <property type="match status" value="1"/>
</dbReference>
<dbReference type="InterPro" id="IPR003510">
    <property type="entry name" value="Fumarate_red_C"/>
</dbReference>
<dbReference type="InterPro" id="IPR034804">
    <property type="entry name" value="SQR/QFR_C/D"/>
</dbReference>
<dbReference type="NCBIfam" id="NF003445">
    <property type="entry name" value="PRK04987.1"/>
    <property type="match status" value="1"/>
</dbReference>
<dbReference type="Pfam" id="PF02300">
    <property type="entry name" value="Fumarate_red_C"/>
    <property type="match status" value="1"/>
</dbReference>
<dbReference type="PIRSF" id="PIRSF000180">
    <property type="entry name" value="FrdC"/>
    <property type="match status" value="1"/>
</dbReference>
<dbReference type="SUPFAM" id="SSF81343">
    <property type="entry name" value="Fumarate reductase respiratory complex transmembrane subunits"/>
    <property type="match status" value="1"/>
</dbReference>
<comment type="function">
    <text evidence="1">Two distinct, membrane-bound, FAD-containing enzymes are responsible for the catalysis of fumarate and succinate interconversion; fumarate reductase is used in anaerobic growth, and succinate dehydrogenase is used in aerobic growth. Anchors the catalytic components of the fumarate reductase complex to the cell inner membrane, binds quinones.</text>
</comment>
<comment type="subunit">
    <text evidence="1">Part of an enzyme complex containing four subunits: a flavoprotein (FrdA), an iron-sulfur protein (FrdB), and two hydrophobic anchor proteins (FrdC and FrdD).</text>
</comment>
<comment type="subcellular location">
    <subcellularLocation>
        <location evidence="1">Cell inner membrane</location>
        <topology evidence="1">Multi-pass membrane protein</topology>
    </subcellularLocation>
</comment>
<comment type="similarity">
    <text evidence="1">Belongs to the FrdC family.</text>
</comment>
<organism>
    <name type="scientific">Shigella flexneri serotype 5b (strain 8401)</name>
    <dbReference type="NCBI Taxonomy" id="373384"/>
    <lineage>
        <taxon>Bacteria</taxon>
        <taxon>Pseudomonadati</taxon>
        <taxon>Pseudomonadota</taxon>
        <taxon>Gammaproteobacteria</taxon>
        <taxon>Enterobacterales</taxon>
        <taxon>Enterobacteriaceae</taxon>
        <taxon>Shigella</taxon>
    </lineage>
</organism>
<gene>
    <name evidence="1" type="primary">frdC</name>
    <name type="ordered locus">SFV_4311</name>
</gene>
<sequence length="131" mass="15015">MTTKRKPYVRPMTSTWWKKLPFYRFYMLREGTAVPAVWFSIELIFGLFALKNGPEAWAGFVDFLQNPVIVIINLITLAAALLHTKTWFELAPKAANIIVKDEKMGPEPIIKSLWAVTVVATIVILFVALYW</sequence>
<accession>Q0SXC4</accession>
<name>FRDC_SHIF8</name>